<protein>
    <recommendedName>
        <fullName>Apo-citrate lyase phosphoribosyl-dephospho-CoA transferase</fullName>
        <ecNumber evidence="1">2.7.7.61</ecNumber>
    </recommendedName>
    <alternativeName>
        <fullName evidence="1">Apo-ACP nucleodityltransferase</fullName>
    </alternativeName>
    <alternativeName>
        <fullName evidence="1">Holo-ACP synthase</fullName>
    </alternativeName>
    <alternativeName>
        <fullName evidence="1">Holo-citrate lyase synthase</fullName>
    </alternativeName>
</protein>
<evidence type="ECO:0000255" key="1">
    <source>
        <dbReference type="HAMAP-Rule" id="MF_00398"/>
    </source>
</evidence>
<sequence length="183" mass="20270">MHLLPELASHHAVSIPELLVSRDERQARQHVWLKRHPVPLVSFTVVAPGPIKDSEVTRRIFNHGVTALRALAAKQGWQIQEQAALVSASGPEGMLSIAAPARDLKLATIELEHSHPLGRLWDIDVLTPEGEILSRRDYSLPPRRCLLCEQSAAVCARGKTHQLTDLLNRMEALLNDVDACNVN</sequence>
<dbReference type="EC" id="2.7.7.61" evidence="1"/>
<dbReference type="EMBL" id="CP001063">
    <property type="protein sequence ID" value="ACD10205.1"/>
    <property type="molecule type" value="Genomic_DNA"/>
</dbReference>
<dbReference type="RefSeq" id="WP_000550422.1">
    <property type="nucleotide sequence ID" value="NC_010658.1"/>
</dbReference>
<dbReference type="SMR" id="B2TTH7"/>
<dbReference type="STRING" id="344609.SbBS512_E0528"/>
<dbReference type="GeneID" id="93776871"/>
<dbReference type="KEGG" id="sbc:SbBS512_E0528"/>
<dbReference type="HOGENOM" id="CLU_104529_1_1_6"/>
<dbReference type="Proteomes" id="UP000001030">
    <property type="component" value="Chromosome"/>
</dbReference>
<dbReference type="GO" id="GO:0050519">
    <property type="term" value="F:holo-citrate lyase synthase activity"/>
    <property type="evidence" value="ECO:0007669"/>
    <property type="project" value="UniProtKB-UniRule"/>
</dbReference>
<dbReference type="GO" id="GO:0051191">
    <property type="term" value="P:prosthetic group biosynthetic process"/>
    <property type="evidence" value="ECO:0007669"/>
    <property type="project" value="InterPro"/>
</dbReference>
<dbReference type="HAMAP" id="MF_00398">
    <property type="entry name" value="CitX"/>
    <property type="match status" value="1"/>
</dbReference>
<dbReference type="InterPro" id="IPR005551">
    <property type="entry name" value="CitX"/>
</dbReference>
<dbReference type="NCBIfam" id="TIGR03124">
    <property type="entry name" value="citrate_citX"/>
    <property type="match status" value="1"/>
</dbReference>
<dbReference type="NCBIfam" id="NF002383">
    <property type="entry name" value="PRK01392.1"/>
    <property type="match status" value="1"/>
</dbReference>
<dbReference type="Pfam" id="PF03802">
    <property type="entry name" value="CitX"/>
    <property type="match status" value="1"/>
</dbReference>
<reference key="1">
    <citation type="submission" date="2008-05" db="EMBL/GenBank/DDBJ databases">
        <title>Complete sequence of Shigella boydii serotype 18 strain BS512.</title>
        <authorList>
            <person name="Rasko D.A."/>
            <person name="Rosovitz M."/>
            <person name="Maurelli A.T."/>
            <person name="Myers G."/>
            <person name="Seshadri R."/>
            <person name="Cer R."/>
            <person name="Jiang L."/>
            <person name="Ravel J."/>
            <person name="Sebastian Y."/>
        </authorList>
    </citation>
    <scope>NUCLEOTIDE SEQUENCE [LARGE SCALE GENOMIC DNA]</scope>
    <source>
        <strain>CDC 3083-94 / BS512</strain>
    </source>
</reference>
<accession>B2TTH7</accession>
<gene>
    <name evidence="1" type="primary">citX</name>
    <name type="ordered locus">SbBS512_E0528</name>
</gene>
<comment type="function">
    <text evidence="1">Transfers 2-(5''-triphosphoribosyl)-3'-dephosphocoenzyme-A on a serine residue to the apo-acyl carrier protein (gamma chain) of the citrate lyase to yield holo-acyl carrier protein.</text>
</comment>
<comment type="catalytic activity">
    <reaction evidence="1">
        <text>apo-[citrate lyase ACP] + 2'-(5''-triphospho-alpha-D-ribosyl)-3'-dephospho-CoA = holo-[citrate lyase ACP] + diphosphate</text>
        <dbReference type="Rhea" id="RHEA:16333"/>
        <dbReference type="Rhea" id="RHEA-COMP:10157"/>
        <dbReference type="Rhea" id="RHEA-COMP:10158"/>
        <dbReference type="ChEBI" id="CHEBI:29999"/>
        <dbReference type="ChEBI" id="CHEBI:33019"/>
        <dbReference type="ChEBI" id="CHEBI:61378"/>
        <dbReference type="ChEBI" id="CHEBI:82683"/>
        <dbReference type="EC" id="2.7.7.61"/>
    </reaction>
</comment>
<comment type="similarity">
    <text evidence="1">Belongs to the CitX family.</text>
</comment>
<name>CITX_SHIB3</name>
<feature type="chain" id="PRO_1000189608" description="Apo-citrate lyase phosphoribosyl-dephospho-CoA transferase">
    <location>
        <begin position="1"/>
        <end position="183"/>
    </location>
</feature>
<keyword id="KW-0548">Nucleotidyltransferase</keyword>
<keyword id="KW-1185">Reference proteome</keyword>
<keyword id="KW-0808">Transferase</keyword>
<organism>
    <name type="scientific">Shigella boydii serotype 18 (strain CDC 3083-94 / BS512)</name>
    <dbReference type="NCBI Taxonomy" id="344609"/>
    <lineage>
        <taxon>Bacteria</taxon>
        <taxon>Pseudomonadati</taxon>
        <taxon>Pseudomonadota</taxon>
        <taxon>Gammaproteobacteria</taxon>
        <taxon>Enterobacterales</taxon>
        <taxon>Enterobacteriaceae</taxon>
        <taxon>Shigella</taxon>
    </lineage>
</organism>
<proteinExistence type="inferred from homology"/>